<feature type="chain" id="PRO_0000124733" description="Membrane protein insertase YidC">
    <location>
        <begin position="1"/>
        <end position="545"/>
    </location>
</feature>
<feature type="transmembrane region" description="Helical" evidence="1">
    <location>
        <begin position="350"/>
        <end position="370"/>
    </location>
</feature>
<feature type="transmembrane region" description="Helical" evidence="1">
    <location>
        <begin position="424"/>
        <end position="444"/>
    </location>
</feature>
<feature type="transmembrane region" description="Helical" evidence="1">
    <location>
        <begin position="461"/>
        <end position="481"/>
    </location>
</feature>
<feature type="transmembrane region" description="Helical" evidence="1">
    <location>
        <begin position="498"/>
        <end position="518"/>
    </location>
</feature>
<reference key="1">
    <citation type="journal article" date="2000" name="Science">
        <title>Complete genome sequence of Neisseria meningitidis serogroup B strain MC58.</title>
        <authorList>
            <person name="Tettelin H."/>
            <person name="Saunders N.J."/>
            <person name="Heidelberg J.F."/>
            <person name="Jeffries A.C."/>
            <person name="Nelson K.E."/>
            <person name="Eisen J.A."/>
            <person name="Ketchum K.A."/>
            <person name="Hood D.W."/>
            <person name="Peden J.F."/>
            <person name="Dodson R.J."/>
            <person name="Nelson W.C."/>
            <person name="Gwinn M.L."/>
            <person name="DeBoy R.T."/>
            <person name="Peterson J.D."/>
            <person name="Hickey E.K."/>
            <person name="Haft D.H."/>
            <person name="Salzberg S.L."/>
            <person name="White O."/>
            <person name="Fleischmann R.D."/>
            <person name="Dougherty B.A."/>
            <person name="Mason T.M."/>
            <person name="Ciecko A."/>
            <person name="Parksey D.S."/>
            <person name="Blair E."/>
            <person name="Cittone H."/>
            <person name="Clark E.B."/>
            <person name="Cotton M.D."/>
            <person name="Utterback T.R."/>
            <person name="Khouri H.M."/>
            <person name="Qin H."/>
            <person name="Vamathevan J.J."/>
            <person name="Gill J."/>
            <person name="Scarlato V."/>
            <person name="Masignani V."/>
            <person name="Pizza M."/>
            <person name="Grandi G."/>
            <person name="Sun L."/>
            <person name="Smith H.O."/>
            <person name="Fraser C.M."/>
            <person name="Moxon E.R."/>
            <person name="Rappuoli R."/>
            <person name="Venter J.C."/>
        </authorList>
    </citation>
    <scope>NUCLEOTIDE SEQUENCE [LARGE SCALE GENOMIC DNA]</scope>
    <source>
        <strain>ATCC BAA-335 / MC58</strain>
    </source>
</reference>
<organism>
    <name type="scientific">Neisseria meningitidis serogroup B (strain ATCC BAA-335 / MC58)</name>
    <dbReference type="NCBI Taxonomy" id="122586"/>
    <lineage>
        <taxon>Bacteria</taxon>
        <taxon>Pseudomonadati</taxon>
        <taxon>Pseudomonadota</taxon>
        <taxon>Betaproteobacteria</taxon>
        <taxon>Neisseriales</taxon>
        <taxon>Neisseriaceae</taxon>
        <taxon>Neisseria</taxon>
    </lineage>
</organism>
<name>YIDC_NEIMB</name>
<evidence type="ECO:0000255" key="1">
    <source>
        <dbReference type="HAMAP-Rule" id="MF_01810"/>
    </source>
</evidence>
<sequence length="545" mass="60723">MDFKRLTAFFAIALVIMIGWEKMFPTPKPVPAPQQAAQQQAVTASAEAALAPATPITVTTDTVQAVIDEKSGDLRRLTLLKYKATGDENKPFILFGDGKEYTYVAQSELLDAQGNNILKGIGFSAPKKQYSLEGDKVEVRLSAPETRGLKIDKVYTFTKGSYLVNVRFDIANGSGQTANLSADYRIVRDHSEPEGQGYFTHSYVGPVVYTPEGNFQKVSFSDLDDDAKSGKSEAEYIRKTPTGWLGMIEHHFMSTWILQPKGRQSVCAAGECNIDIKRRNDKLYSTSVSVPLAAIQNGAKAEASINLYAGPQTTSVIANIADNLQLAKDYGKVHWFASPLFWLLNQLHNIIGNWGWAIIVLTIIVKAVLYPLTNASYRSMAKMRAAAPKLQAIKEKYGDDRMAQQQAMMQLYTDEKINPLGGCLPMLLQIPVFIGLYWALFASVELRQAPWLGWITDLSRADPYYILPIIMAATMFAQTYLNPPPTDPMQAKMMKIMPLVFSVMFFFFPAGLVLYWVVNNLLTIAQQWHINRSIEKQRAQGEVVS</sequence>
<keyword id="KW-0997">Cell inner membrane</keyword>
<keyword id="KW-1003">Cell membrane</keyword>
<keyword id="KW-0143">Chaperone</keyword>
<keyword id="KW-0472">Membrane</keyword>
<keyword id="KW-0653">Protein transport</keyword>
<keyword id="KW-1185">Reference proteome</keyword>
<keyword id="KW-0812">Transmembrane</keyword>
<keyword id="KW-1133">Transmembrane helix</keyword>
<keyword id="KW-0813">Transport</keyword>
<gene>
    <name evidence="1" type="primary">yidC</name>
    <name type="ordered locus">NMB1907</name>
</gene>
<comment type="function">
    <text evidence="1">Required for the insertion and/or proper folding and/or complex formation of integral membrane proteins into the membrane. Involved in integration of membrane proteins that insert both dependently and independently of the Sec translocase complex, as well as at least some lipoproteins. Aids folding of multispanning membrane proteins.</text>
</comment>
<comment type="subunit">
    <text evidence="1">Interacts with the Sec translocase complex via SecD. Specifically interacts with transmembrane segments of nascent integral membrane proteins during membrane integration.</text>
</comment>
<comment type="subcellular location">
    <subcellularLocation>
        <location evidence="1">Cell inner membrane</location>
        <topology evidence="1">Multi-pass membrane protein</topology>
    </subcellularLocation>
</comment>
<comment type="similarity">
    <text evidence="1">Belongs to the OXA1/ALB3/YidC family. Type 1 subfamily.</text>
</comment>
<proteinExistence type="inferred from homology"/>
<protein>
    <recommendedName>
        <fullName evidence="1">Membrane protein insertase YidC</fullName>
    </recommendedName>
    <alternativeName>
        <fullName evidence="1">Foldase YidC</fullName>
    </alternativeName>
    <alternativeName>
        <fullName evidence="1">Membrane integrase YidC</fullName>
    </alternativeName>
    <alternativeName>
        <fullName evidence="1">Membrane protein YidC</fullName>
    </alternativeName>
</protein>
<accession>Q9JXS4</accession>
<dbReference type="EMBL" id="AE002098">
    <property type="protein sequence ID" value="AAF42237.1"/>
    <property type="molecule type" value="Genomic_DNA"/>
</dbReference>
<dbReference type="PIR" id="B81028">
    <property type="entry name" value="B81028"/>
</dbReference>
<dbReference type="RefSeq" id="NP_274901.1">
    <property type="nucleotide sequence ID" value="NC_003112.2"/>
</dbReference>
<dbReference type="RefSeq" id="WP_002221552.1">
    <property type="nucleotide sequence ID" value="NC_003112.2"/>
</dbReference>
<dbReference type="SMR" id="Q9JXS4"/>
<dbReference type="FunCoup" id="Q9JXS4">
    <property type="interactions" value="239"/>
</dbReference>
<dbReference type="STRING" id="122586.NMB1907"/>
<dbReference type="PaxDb" id="122586-NMB1907"/>
<dbReference type="KEGG" id="nme:NMB1907"/>
<dbReference type="PATRIC" id="fig|122586.8.peg.2433"/>
<dbReference type="HOGENOM" id="CLU_016535_3_0_4"/>
<dbReference type="InParanoid" id="Q9JXS4"/>
<dbReference type="OrthoDB" id="9780552at2"/>
<dbReference type="Proteomes" id="UP000000425">
    <property type="component" value="Chromosome"/>
</dbReference>
<dbReference type="GO" id="GO:0005886">
    <property type="term" value="C:plasma membrane"/>
    <property type="evidence" value="ECO:0000318"/>
    <property type="project" value="GO_Central"/>
</dbReference>
<dbReference type="GO" id="GO:0032977">
    <property type="term" value="F:membrane insertase activity"/>
    <property type="evidence" value="ECO:0000318"/>
    <property type="project" value="GO_Central"/>
</dbReference>
<dbReference type="GO" id="GO:0051205">
    <property type="term" value="P:protein insertion into membrane"/>
    <property type="evidence" value="ECO:0000318"/>
    <property type="project" value="GO_Central"/>
</dbReference>
<dbReference type="GO" id="GO:0015031">
    <property type="term" value="P:protein transport"/>
    <property type="evidence" value="ECO:0007669"/>
    <property type="project" value="UniProtKB-KW"/>
</dbReference>
<dbReference type="CDD" id="cd20070">
    <property type="entry name" value="5TM_YidC_Alb3"/>
    <property type="match status" value="1"/>
</dbReference>
<dbReference type="CDD" id="cd19961">
    <property type="entry name" value="EcYidC-like_peri"/>
    <property type="match status" value="1"/>
</dbReference>
<dbReference type="FunFam" id="2.70.98.90:FF:000003">
    <property type="entry name" value="Membrane protein insertase YidC"/>
    <property type="match status" value="1"/>
</dbReference>
<dbReference type="Gene3D" id="2.70.98.90">
    <property type="match status" value="1"/>
</dbReference>
<dbReference type="HAMAP" id="MF_01810">
    <property type="entry name" value="YidC_type1"/>
    <property type="match status" value="1"/>
</dbReference>
<dbReference type="InterPro" id="IPR019998">
    <property type="entry name" value="Membr_insert_YidC"/>
</dbReference>
<dbReference type="InterPro" id="IPR028053">
    <property type="entry name" value="Membr_insert_YidC_N"/>
</dbReference>
<dbReference type="InterPro" id="IPR001708">
    <property type="entry name" value="YidC/ALB3/OXA1/COX18"/>
</dbReference>
<dbReference type="InterPro" id="IPR028055">
    <property type="entry name" value="YidC/Oxa/ALB_C"/>
</dbReference>
<dbReference type="InterPro" id="IPR047196">
    <property type="entry name" value="YidC_ALB_C"/>
</dbReference>
<dbReference type="InterPro" id="IPR038221">
    <property type="entry name" value="YidC_periplasmic_sf"/>
</dbReference>
<dbReference type="NCBIfam" id="NF002352">
    <property type="entry name" value="PRK01318.1-3"/>
    <property type="match status" value="1"/>
</dbReference>
<dbReference type="NCBIfam" id="TIGR03593">
    <property type="entry name" value="yidC_nterm"/>
    <property type="match status" value="1"/>
</dbReference>
<dbReference type="NCBIfam" id="TIGR03592">
    <property type="entry name" value="yidC_oxa1_cterm"/>
    <property type="match status" value="1"/>
</dbReference>
<dbReference type="PANTHER" id="PTHR12428:SF65">
    <property type="entry name" value="CYTOCHROME C OXIDASE ASSEMBLY PROTEIN COX18, MITOCHONDRIAL"/>
    <property type="match status" value="1"/>
</dbReference>
<dbReference type="PANTHER" id="PTHR12428">
    <property type="entry name" value="OXA1"/>
    <property type="match status" value="1"/>
</dbReference>
<dbReference type="Pfam" id="PF02096">
    <property type="entry name" value="60KD_IMP"/>
    <property type="match status" value="1"/>
</dbReference>
<dbReference type="Pfam" id="PF14849">
    <property type="entry name" value="YidC_periplas"/>
    <property type="match status" value="1"/>
</dbReference>
<dbReference type="PRINTS" id="PR00701">
    <property type="entry name" value="60KDINNERMP"/>
</dbReference>
<dbReference type="PRINTS" id="PR01900">
    <property type="entry name" value="YIDCPROTEIN"/>
</dbReference>